<comment type="function">
    <text evidence="1">Catalyzes the condensation of the acetyl group of acetyl-CoA with 3-methyl-2-oxobutanoate (2-ketoisovalerate) to form 3-carboxy-3-hydroxy-4-methylpentanoate (2-isopropylmalate).</text>
</comment>
<comment type="catalytic activity">
    <reaction evidence="1">
        <text>3-methyl-2-oxobutanoate + acetyl-CoA + H2O = (2S)-2-isopropylmalate + CoA + H(+)</text>
        <dbReference type="Rhea" id="RHEA:21524"/>
        <dbReference type="ChEBI" id="CHEBI:1178"/>
        <dbReference type="ChEBI" id="CHEBI:11851"/>
        <dbReference type="ChEBI" id="CHEBI:15377"/>
        <dbReference type="ChEBI" id="CHEBI:15378"/>
        <dbReference type="ChEBI" id="CHEBI:57287"/>
        <dbReference type="ChEBI" id="CHEBI:57288"/>
        <dbReference type="EC" id="2.3.3.13"/>
    </reaction>
</comment>
<comment type="cofactor">
    <cofactor evidence="1">
        <name>Mn(2+)</name>
        <dbReference type="ChEBI" id="CHEBI:29035"/>
    </cofactor>
</comment>
<comment type="pathway">
    <text evidence="1">Amino-acid biosynthesis; L-leucine biosynthesis; L-leucine from 3-methyl-2-oxobutanoate: step 1/4.</text>
</comment>
<comment type="subunit">
    <text evidence="1">Homodimer.</text>
</comment>
<comment type="subcellular location">
    <subcellularLocation>
        <location evidence="1">Cytoplasm</location>
    </subcellularLocation>
</comment>
<comment type="similarity">
    <text evidence="1">Belongs to the alpha-IPM synthase/homocitrate synthase family. LeuA type 1 subfamily.</text>
</comment>
<dbReference type="EC" id="2.3.3.13" evidence="1"/>
<dbReference type="EMBL" id="CP000572">
    <property type="protein sequence ID" value="ABN92198.1"/>
    <property type="molecule type" value="Genomic_DNA"/>
</dbReference>
<dbReference type="RefSeq" id="WP_004522419.1">
    <property type="nucleotide sequence ID" value="NC_009076.1"/>
</dbReference>
<dbReference type="SMR" id="A3NT94"/>
<dbReference type="KEGG" id="bpl:BURPS1106A_1286"/>
<dbReference type="HOGENOM" id="CLU_022158_0_1_4"/>
<dbReference type="UniPathway" id="UPA00048">
    <property type="reaction ID" value="UER00070"/>
</dbReference>
<dbReference type="Proteomes" id="UP000006738">
    <property type="component" value="Chromosome I"/>
</dbReference>
<dbReference type="GO" id="GO:0005829">
    <property type="term" value="C:cytosol"/>
    <property type="evidence" value="ECO:0007669"/>
    <property type="project" value="TreeGrafter"/>
</dbReference>
<dbReference type="GO" id="GO:0003852">
    <property type="term" value="F:2-isopropylmalate synthase activity"/>
    <property type="evidence" value="ECO:0007669"/>
    <property type="project" value="UniProtKB-UniRule"/>
</dbReference>
<dbReference type="GO" id="GO:0003985">
    <property type="term" value="F:acetyl-CoA C-acetyltransferase activity"/>
    <property type="evidence" value="ECO:0007669"/>
    <property type="project" value="UniProtKB-UniRule"/>
</dbReference>
<dbReference type="GO" id="GO:0030145">
    <property type="term" value="F:manganese ion binding"/>
    <property type="evidence" value="ECO:0007669"/>
    <property type="project" value="UniProtKB-UniRule"/>
</dbReference>
<dbReference type="GO" id="GO:0009098">
    <property type="term" value="P:L-leucine biosynthetic process"/>
    <property type="evidence" value="ECO:0007669"/>
    <property type="project" value="UniProtKB-UniRule"/>
</dbReference>
<dbReference type="CDD" id="cd07940">
    <property type="entry name" value="DRE_TIM_IPMS"/>
    <property type="match status" value="1"/>
</dbReference>
<dbReference type="FunFam" id="1.10.238.260:FF:000001">
    <property type="entry name" value="2-isopropylmalate synthase"/>
    <property type="match status" value="1"/>
</dbReference>
<dbReference type="FunFam" id="3.20.20.70:FF:000010">
    <property type="entry name" value="2-isopropylmalate synthase"/>
    <property type="match status" value="1"/>
</dbReference>
<dbReference type="FunFam" id="3.30.160.270:FF:000003">
    <property type="entry name" value="2-isopropylmalate synthase"/>
    <property type="match status" value="1"/>
</dbReference>
<dbReference type="Gene3D" id="1.10.238.260">
    <property type="match status" value="1"/>
</dbReference>
<dbReference type="Gene3D" id="3.30.160.270">
    <property type="match status" value="1"/>
</dbReference>
<dbReference type="Gene3D" id="3.20.20.70">
    <property type="entry name" value="Aldolase class I"/>
    <property type="match status" value="1"/>
</dbReference>
<dbReference type="HAMAP" id="MF_01025">
    <property type="entry name" value="LeuA_type1"/>
    <property type="match status" value="1"/>
</dbReference>
<dbReference type="InterPro" id="IPR050073">
    <property type="entry name" value="2-IPM_HCS-like"/>
</dbReference>
<dbReference type="InterPro" id="IPR013709">
    <property type="entry name" value="2-isopropylmalate_synth_dimer"/>
</dbReference>
<dbReference type="InterPro" id="IPR002034">
    <property type="entry name" value="AIPM/Hcit_synth_CS"/>
</dbReference>
<dbReference type="InterPro" id="IPR013785">
    <property type="entry name" value="Aldolase_TIM"/>
</dbReference>
<dbReference type="InterPro" id="IPR054691">
    <property type="entry name" value="LeuA/HCS_post-cat"/>
</dbReference>
<dbReference type="InterPro" id="IPR036230">
    <property type="entry name" value="LeuA_allosteric_dom_sf"/>
</dbReference>
<dbReference type="InterPro" id="IPR005671">
    <property type="entry name" value="LeuA_bact_synth"/>
</dbReference>
<dbReference type="InterPro" id="IPR000891">
    <property type="entry name" value="PYR_CT"/>
</dbReference>
<dbReference type="NCBIfam" id="TIGR00973">
    <property type="entry name" value="leuA_bact"/>
    <property type="match status" value="1"/>
</dbReference>
<dbReference type="NCBIfam" id="NF002086">
    <property type="entry name" value="PRK00915.1-3"/>
    <property type="match status" value="1"/>
</dbReference>
<dbReference type="NCBIfam" id="NF002087">
    <property type="entry name" value="PRK00915.1-4"/>
    <property type="match status" value="1"/>
</dbReference>
<dbReference type="PANTHER" id="PTHR10277:SF9">
    <property type="entry name" value="2-ISOPROPYLMALATE SYNTHASE 1, CHLOROPLASTIC-RELATED"/>
    <property type="match status" value="1"/>
</dbReference>
<dbReference type="PANTHER" id="PTHR10277">
    <property type="entry name" value="HOMOCITRATE SYNTHASE-RELATED"/>
    <property type="match status" value="1"/>
</dbReference>
<dbReference type="Pfam" id="PF22617">
    <property type="entry name" value="HCS_D2"/>
    <property type="match status" value="1"/>
</dbReference>
<dbReference type="Pfam" id="PF00682">
    <property type="entry name" value="HMGL-like"/>
    <property type="match status" value="1"/>
</dbReference>
<dbReference type="Pfam" id="PF08502">
    <property type="entry name" value="LeuA_dimer"/>
    <property type="match status" value="1"/>
</dbReference>
<dbReference type="SMART" id="SM00917">
    <property type="entry name" value="LeuA_dimer"/>
    <property type="match status" value="1"/>
</dbReference>
<dbReference type="SUPFAM" id="SSF110921">
    <property type="entry name" value="2-isopropylmalate synthase LeuA, allosteric (dimerisation) domain"/>
    <property type="match status" value="1"/>
</dbReference>
<dbReference type="SUPFAM" id="SSF51569">
    <property type="entry name" value="Aldolase"/>
    <property type="match status" value="1"/>
</dbReference>
<dbReference type="PROSITE" id="PS00815">
    <property type="entry name" value="AIPM_HOMOCIT_SYNTH_1"/>
    <property type="match status" value="1"/>
</dbReference>
<dbReference type="PROSITE" id="PS00816">
    <property type="entry name" value="AIPM_HOMOCIT_SYNTH_2"/>
    <property type="match status" value="1"/>
</dbReference>
<dbReference type="PROSITE" id="PS50991">
    <property type="entry name" value="PYR_CT"/>
    <property type="match status" value="1"/>
</dbReference>
<accession>A3NT94</accession>
<evidence type="ECO:0000255" key="1">
    <source>
        <dbReference type="HAMAP-Rule" id="MF_01025"/>
    </source>
</evidence>
<protein>
    <recommendedName>
        <fullName evidence="1">2-isopropylmalate synthase</fullName>
        <ecNumber evidence="1">2.3.3.13</ecNumber>
    </recommendedName>
    <alternativeName>
        <fullName evidence="1">Alpha-IPM synthase</fullName>
    </alternativeName>
    <alternativeName>
        <fullName evidence="1">Alpha-isopropylmalate synthase</fullName>
    </alternativeName>
</protein>
<organism>
    <name type="scientific">Burkholderia pseudomallei (strain 1106a)</name>
    <dbReference type="NCBI Taxonomy" id="357348"/>
    <lineage>
        <taxon>Bacteria</taxon>
        <taxon>Pseudomonadati</taxon>
        <taxon>Pseudomonadota</taxon>
        <taxon>Betaproteobacteria</taxon>
        <taxon>Burkholderiales</taxon>
        <taxon>Burkholderiaceae</taxon>
        <taxon>Burkholderia</taxon>
        <taxon>pseudomallei group</taxon>
    </lineage>
</organism>
<name>LEU1_BURP0</name>
<proteinExistence type="inferred from homology"/>
<gene>
    <name evidence="1" type="primary">leuA</name>
    <name type="ordered locus">BURPS1106A_1286</name>
</gene>
<feature type="chain" id="PRO_1000149151" description="2-isopropylmalate synthase">
    <location>
        <begin position="1"/>
        <end position="515"/>
    </location>
</feature>
<feature type="domain" description="Pyruvate carboxyltransferase" evidence="1">
    <location>
        <begin position="5"/>
        <end position="268"/>
    </location>
</feature>
<feature type="region of interest" description="Regulatory domain" evidence="1">
    <location>
        <begin position="396"/>
        <end position="515"/>
    </location>
</feature>
<feature type="binding site" evidence="1">
    <location>
        <position position="14"/>
    </location>
    <ligand>
        <name>Mn(2+)</name>
        <dbReference type="ChEBI" id="CHEBI:29035"/>
    </ligand>
</feature>
<feature type="binding site" evidence="1">
    <location>
        <position position="202"/>
    </location>
    <ligand>
        <name>Mn(2+)</name>
        <dbReference type="ChEBI" id="CHEBI:29035"/>
    </ligand>
</feature>
<feature type="binding site" evidence="1">
    <location>
        <position position="204"/>
    </location>
    <ligand>
        <name>Mn(2+)</name>
        <dbReference type="ChEBI" id="CHEBI:29035"/>
    </ligand>
</feature>
<feature type="binding site" evidence="1">
    <location>
        <position position="239"/>
    </location>
    <ligand>
        <name>Mn(2+)</name>
        <dbReference type="ChEBI" id="CHEBI:29035"/>
    </ligand>
</feature>
<reference key="1">
    <citation type="journal article" date="2010" name="Genome Biol. Evol.">
        <title>Continuing evolution of Burkholderia mallei through genome reduction and large-scale rearrangements.</title>
        <authorList>
            <person name="Losada L."/>
            <person name="Ronning C.M."/>
            <person name="DeShazer D."/>
            <person name="Woods D."/>
            <person name="Fedorova N."/>
            <person name="Kim H.S."/>
            <person name="Shabalina S.A."/>
            <person name="Pearson T.R."/>
            <person name="Brinkac L."/>
            <person name="Tan P."/>
            <person name="Nandi T."/>
            <person name="Crabtree J."/>
            <person name="Badger J."/>
            <person name="Beckstrom-Sternberg S."/>
            <person name="Saqib M."/>
            <person name="Schutzer S.E."/>
            <person name="Keim P."/>
            <person name="Nierman W.C."/>
        </authorList>
    </citation>
    <scope>NUCLEOTIDE SEQUENCE [LARGE SCALE GENOMIC DNA]</scope>
    <source>
        <strain>1106a</strain>
    </source>
</reference>
<keyword id="KW-0028">Amino-acid biosynthesis</keyword>
<keyword id="KW-0100">Branched-chain amino acid biosynthesis</keyword>
<keyword id="KW-0963">Cytoplasm</keyword>
<keyword id="KW-0432">Leucine biosynthesis</keyword>
<keyword id="KW-0464">Manganese</keyword>
<keyword id="KW-0479">Metal-binding</keyword>
<keyword id="KW-0808">Transferase</keyword>
<sequence length="515" mass="55586">MTDKLIIFDTTLRDGEQSPGASMTKEEKIRIAKQLERMKVDVIEAGFAASSNGDFDAIQTIASQVKDSTICSLARANDKDIQRAADALKPANSFRIHTFIATSPLHMEKKLRMTPDQVFEQARLAVRFARKFTDNIEFSPEDGSRSDMDFLCRVLEAVIAEGATTINIADTVGYGVPELYGNLVKTLRERIPNSDKAIFSVHCHNDLGMAVANSLAGVKIGGARQVECTINGLGERAGNTSLEEIVMAVKTRKDYFGLDLGIDTTQIVPASKLVSQITGFVVQPNKAVVGANAFAHASGIHQDGVLKARDTYEIMRAEDVGWTANKIVLGKLSGRNAFKQRLQELGVSLDSEAELNAAFARFKDLADRKAEIFDEDIIAIVTEEESALAQEHEHYKFVSLAQRSETGERPQAKVVFAVDGDEVAGEASGNGPVDATFNAIETEVGSGAELLLYSVNAITTGTQAQGEVTVRLSKSGRIVNGVGTDPDIVAASAKAYIAALNKLYSNADKLNPQRA</sequence>